<dbReference type="EMBL" id="DS027059">
    <property type="protein sequence ID" value="EAW07339.1"/>
    <property type="molecule type" value="Genomic_DNA"/>
</dbReference>
<dbReference type="RefSeq" id="XP_001268765.1">
    <property type="nucleotide sequence ID" value="XM_001268764.1"/>
</dbReference>
<dbReference type="STRING" id="344612.A1CNW8"/>
<dbReference type="GlyCosmos" id="A1CNW8">
    <property type="glycosylation" value="2 sites, No reported glycans"/>
</dbReference>
<dbReference type="EnsemblFungi" id="EAW07339">
    <property type="protein sequence ID" value="EAW07339"/>
    <property type="gene ID" value="ACLA_020460"/>
</dbReference>
<dbReference type="GeneID" id="4701595"/>
<dbReference type="KEGG" id="act:ACLA_020460"/>
<dbReference type="VEuPathDB" id="FungiDB:ACLA_020460"/>
<dbReference type="eggNOG" id="KOG1477">
    <property type="taxonomic scope" value="Eukaryota"/>
</dbReference>
<dbReference type="HOGENOM" id="CLU_016552_1_1_1"/>
<dbReference type="OMA" id="FFFKYTR"/>
<dbReference type="OrthoDB" id="258495at2759"/>
<dbReference type="Proteomes" id="UP000006701">
    <property type="component" value="Unassembled WGS sequence"/>
</dbReference>
<dbReference type="GO" id="GO:0010008">
    <property type="term" value="C:endosome membrane"/>
    <property type="evidence" value="ECO:0007669"/>
    <property type="project" value="UniProtKB-SubCell"/>
</dbReference>
<dbReference type="GO" id="GO:0005774">
    <property type="term" value="C:vacuolar membrane"/>
    <property type="evidence" value="ECO:0007669"/>
    <property type="project" value="UniProtKB-SubCell"/>
</dbReference>
<dbReference type="GO" id="GO:0015031">
    <property type="term" value="P:protein transport"/>
    <property type="evidence" value="ECO:0007669"/>
    <property type="project" value="UniProtKB-KW"/>
</dbReference>
<dbReference type="CDD" id="cd12910">
    <property type="entry name" value="SPRY_SSH4_like"/>
    <property type="match status" value="1"/>
</dbReference>
<dbReference type="FunFam" id="2.60.120.920:FF:000065">
    <property type="entry name" value="Ear1p"/>
    <property type="match status" value="1"/>
</dbReference>
<dbReference type="Gene3D" id="2.60.120.920">
    <property type="match status" value="1"/>
</dbReference>
<dbReference type="InterPro" id="IPR001870">
    <property type="entry name" value="B30.2/SPRY"/>
</dbReference>
<dbReference type="InterPro" id="IPR043136">
    <property type="entry name" value="B30.2/SPRY_sf"/>
</dbReference>
<dbReference type="InterPro" id="IPR013320">
    <property type="entry name" value="ConA-like_dom_sf"/>
</dbReference>
<dbReference type="InterPro" id="IPR003877">
    <property type="entry name" value="SPRY_dom"/>
</dbReference>
<dbReference type="InterPro" id="IPR035780">
    <property type="entry name" value="SPRY_Ssh4-like"/>
</dbReference>
<dbReference type="InterPro" id="IPR050618">
    <property type="entry name" value="Ubq-SigPath_Reg"/>
</dbReference>
<dbReference type="PANTHER" id="PTHR12864">
    <property type="entry name" value="RAN BINDING PROTEIN 9-RELATED"/>
    <property type="match status" value="1"/>
</dbReference>
<dbReference type="Pfam" id="PF00622">
    <property type="entry name" value="SPRY"/>
    <property type="match status" value="1"/>
</dbReference>
<dbReference type="SMART" id="SM00449">
    <property type="entry name" value="SPRY"/>
    <property type="match status" value="1"/>
</dbReference>
<dbReference type="SUPFAM" id="SSF49899">
    <property type="entry name" value="Concanavalin A-like lectins/glucanases"/>
    <property type="match status" value="1"/>
</dbReference>
<dbReference type="PROSITE" id="PS50188">
    <property type="entry name" value="B302_SPRY"/>
    <property type="match status" value="1"/>
</dbReference>
<name>SSH4_ASPCL</name>
<sequence length="511" mass="54917">MRGSEASGPGALLGAASTLTTSVIRNPTSIPTSSAPIPSTDAGLVAKNVEHVLMSLTAQNDGGLVSVSGNSSGSTGKGILIGVLSAFGSAVVAVIVLAIFFFFKYTRRGRIMLDRIGRPGEFDDEQAFAREEAEALEVMDDLSRSEYMRAKAFVEAYPPESMQTDISLSQFLAIQEKGVSAWEFQPELEIANCFVEGRTEIEFYDSECSVQTNLPVPKQNDVYYWEAKIYDKPENTLVSVGMTTKPYPLFRLPGFHKYSVAYSSTGHRRHNQPFASTPYGPPLSQGDVIGVGYRPRSGTIFFTRNGKKLEDVVHAAKTQNFFPTVGANGPCTVHVNFGQMGFVFIEANVKKWGLAPMTGSLAPPPPYGSEQGSILLESGRESAAQISQRVYQEAGYARTNSTVRIPPSRSPGPVRSPTDISLAQLAHIPSHEDVGEGSSQANTIDGEQTPLLNTNDLDDQVPPPEYSSPDGSRRGSDIAGDLPRQGSPPIPSYDAAVGNHSGDTARSDSEP</sequence>
<keyword id="KW-0967">Endosome</keyword>
<keyword id="KW-0325">Glycoprotein</keyword>
<keyword id="KW-0472">Membrane</keyword>
<keyword id="KW-0653">Protein transport</keyword>
<keyword id="KW-1185">Reference proteome</keyword>
<keyword id="KW-0735">Signal-anchor</keyword>
<keyword id="KW-0812">Transmembrane</keyword>
<keyword id="KW-1133">Transmembrane helix</keyword>
<keyword id="KW-0813">Transport</keyword>
<keyword id="KW-0926">Vacuole</keyword>
<comment type="function">
    <text evidence="1">Components of the endosome-vacuole trafficking pathway that regulates nutrient transport. May be involved in processes which determine whether plasma membrane proteins are degraded or routed to the plasma membrane (By similarity).</text>
</comment>
<comment type="subcellular location">
    <subcellularLocation>
        <location evidence="1">Vacuole membrane</location>
        <topology evidence="1">Single-pass type II membrane protein</topology>
    </subcellularLocation>
    <subcellularLocation>
        <location evidence="1">Endosome membrane</location>
        <topology evidence="1">Single-pass type II membrane protein</topology>
    </subcellularLocation>
</comment>
<comment type="similarity">
    <text evidence="5">Belongs to the SSH4 family.</text>
</comment>
<protein>
    <recommendedName>
        <fullName>Protein ssh4</fullName>
    </recommendedName>
</protein>
<evidence type="ECO:0000250" key="1"/>
<evidence type="ECO:0000255" key="2"/>
<evidence type="ECO:0000255" key="3">
    <source>
        <dbReference type="PROSITE-ProRule" id="PRU00548"/>
    </source>
</evidence>
<evidence type="ECO:0000256" key="4">
    <source>
        <dbReference type="SAM" id="MobiDB-lite"/>
    </source>
</evidence>
<evidence type="ECO:0000305" key="5"/>
<accession>A1CNW8</accession>
<feature type="chain" id="PRO_0000324476" description="Protein ssh4">
    <location>
        <begin position="1"/>
        <end position="511"/>
    </location>
</feature>
<feature type="topological domain" description="Cytoplasmic" evidence="2">
    <location>
        <begin position="1"/>
        <end position="82"/>
    </location>
</feature>
<feature type="transmembrane region" description="Helical; Signal-anchor for type II membrane protein" evidence="2">
    <location>
        <begin position="83"/>
        <end position="103"/>
    </location>
</feature>
<feature type="topological domain" description="Lumenal" evidence="2">
    <location>
        <begin position="104"/>
        <end position="511"/>
    </location>
</feature>
<feature type="domain" description="B30.2/SPRY" evidence="3">
    <location>
        <begin position="146"/>
        <end position="342"/>
    </location>
</feature>
<feature type="region of interest" description="Disordered" evidence="4">
    <location>
        <begin position="432"/>
        <end position="511"/>
    </location>
</feature>
<feature type="compositionally biased region" description="Polar residues" evidence="4">
    <location>
        <begin position="437"/>
        <end position="455"/>
    </location>
</feature>
<feature type="glycosylation site" description="N-linked (GlcNAc...) asparagine" evidence="2">
    <location>
        <position position="400"/>
    </location>
</feature>
<feature type="glycosylation site" description="N-linked (GlcNAc...) asparagine" evidence="2">
    <location>
        <position position="499"/>
    </location>
</feature>
<gene>
    <name type="primary">ssh4</name>
    <name type="ORF">ACLA_020460</name>
</gene>
<organism>
    <name type="scientific">Aspergillus clavatus (strain ATCC 1007 / CBS 513.65 / DSM 816 / NCTC 3887 / NRRL 1 / QM 1276 / 107)</name>
    <dbReference type="NCBI Taxonomy" id="344612"/>
    <lineage>
        <taxon>Eukaryota</taxon>
        <taxon>Fungi</taxon>
        <taxon>Dikarya</taxon>
        <taxon>Ascomycota</taxon>
        <taxon>Pezizomycotina</taxon>
        <taxon>Eurotiomycetes</taxon>
        <taxon>Eurotiomycetidae</taxon>
        <taxon>Eurotiales</taxon>
        <taxon>Aspergillaceae</taxon>
        <taxon>Aspergillus</taxon>
        <taxon>Aspergillus subgen. Fumigati</taxon>
    </lineage>
</organism>
<reference key="1">
    <citation type="journal article" date="2008" name="PLoS Genet.">
        <title>Genomic islands in the pathogenic filamentous fungus Aspergillus fumigatus.</title>
        <authorList>
            <person name="Fedorova N.D."/>
            <person name="Khaldi N."/>
            <person name="Joardar V.S."/>
            <person name="Maiti R."/>
            <person name="Amedeo P."/>
            <person name="Anderson M.J."/>
            <person name="Crabtree J."/>
            <person name="Silva J.C."/>
            <person name="Badger J.H."/>
            <person name="Albarraq A."/>
            <person name="Angiuoli S."/>
            <person name="Bussey H."/>
            <person name="Bowyer P."/>
            <person name="Cotty P.J."/>
            <person name="Dyer P.S."/>
            <person name="Egan A."/>
            <person name="Galens K."/>
            <person name="Fraser-Liggett C.M."/>
            <person name="Haas B.J."/>
            <person name="Inman J.M."/>
            <person name="Kent R."/>
            <person name="Lemieux S."/>
            <person name="Malavazi I."/>
            <person name="Orvis J."/>
            <person name="Roemer T."/>
            <person name="Ronning C.M."/>
            <person name="Sundaram J.P."/>
            <person name="Sutton G."/>
            <person name="Turner G."/>
            <person name="Venter J.C."/>
            <person name="White O.R."/>
            <person name="Whitty B.R."/>
            <person name="Youngman P."/>
            <person name="Wolfe K.H."/>
            <person name="Goldman G.H."/>
            <person name="Wortman J.R."/>
            <person name="Jiang B."/>
            <person name="Denning D.W."/>
            <person name="Nierman W.C."/>
        </authorList>
    </citation>
    <scope>NUCLEOTIDE SEQUENCE [LARGE SCALE GENOMIC DNA]</scope>
    <source>
        <strain>ATCC 1007 / CBS 513.65 / DSM 816 / NCTC 3887 / NRRL 1 / QM 1276 / 107</strain>
    </source>
</reference>
<proteinExistence type="inferred from homology"/>